<reference key="1">
    <citation type="journal article" date="1983" name="Nucleic Acids Res.">
        <title>Nucleotide sequence of a segment of Drosophila mitochondrial DNA that contains the genes for cytochrome c oxidase subunits II and III and ATPase subunit 6.</title>
        <authorList>
            <person name="Clary D.O."/>
            <person name="Wolstenholme D.R."/>
        </authorList>
    </citation>
    <scope>NUCLEOTIDE SEQUENCE [GENOMIC DNA]</scope>
</reference>
<reference key="2">
    <citation type="journal article" date="1985" name="J. Mol. Evol.">
        <title>The mitochondrial DNA molecular of Drosophila yakuba: nucleotide sequence, gene organization, and genetic code.</title>
        <authorList>
            <person name="Clary D.O."/>
            <person name="Wolstenholme D.R."/>
        </authorList>
    </citation>
    <scope>NUCLEOTIDE SEQUENCE [LARGE SCALE GENOMIC DNA]</scope>
    <source>
        <strain>2317.6 Ivory Coast</strain>
    </source>
</reference>
<accession>P00418</accession>
<geneLocation type="mitochondrion"/>
<sequence>MSTHSNHPFHLVDYSPWPLTGAIGAMTTVSGMVKWFHQYDISLFLLGNIITILTVYQWWRDVSREGTYQGLHTYAVTIGLRWGMILFILSEVLFFVSFFWAFFHSSLSPAIELGASWPPMGIISFNPFQIPLLNTAILLASGVTVTWAHHSLMESNHSQTTQGLFFTVLLGIYFTILQAYEYIEAPFTIADSVYGSTFYMATGFHGVHVLIGTTFLLVCLLRHLNNHFSKNHHFGFEAAAWYWHFVDVVWLFLYITIYWWGG</sequence>
<organism>
    <name type="scientific">Drosophila yakuba</name>
    <name type="common">Fruit fly</name>
    <dbReference type="NCBI Taxonomy" id="7245"/>
    <lineage>
        <taxon>Eukaryota</taxon>
        <taxon>Metazoa</taxon>
        <taxon>Ecdysozoa</taxon>
        <taxon>Arthropoda</taxon>
        <taxon>Hexapoda</taxon>
        <taxon>Insecta</taxon>
        <taxon>Pterygota</taxon>
        <taxon>Neoptera</taxon>
        <taxon>Endopterygota</taxon>
        <taxon>Diptera</taxon>
        <taxon>Brachycera</taxon>
        <taxon>Muscomorpha</taxon>
        <taxon>Ephydroidea</taxon>
        <taxon>Drosophilidae</taxon>
        <taxon>Drosophila</taxon>
        <taxon>Sophophora</taxon>
    </lineage>
</organism>
<dbReference type="EC" id="7.1.1.9"/>
<dbReference type="EMBL" id="X00924">
    <property type="protein sequence ID" value="CAA25443.1"/>
    <property type="molecule type" value="Genomic_DNA"/>
</dbReference>
<dbReference type="EMBL" id="X03240">
    <property type="protein sequence ID" value="CAA26990.1"/>
    <property type="molecule type" value="Genomic_DNA"/>
</dbReference>
<dbReference type="PIR" id="B93477">
    <property type="entry name" value="OTFF3Y"/>
</dbReference>
<dbReference type="SMR" id="P00418"/>
<dbReference type="EnsemblMetazoa" id="GeneID_807631_df_mr">
    <property type="protein sequence ID" value="NP_006907.1"/>
    <property type="gene ID" value="GeneID_807631"/>
</dbReference>
<dbReference type="KEGG" id="dya:COX3"/>
<dbReference type="CTD" id="4514"/>
<dbReference type="OrthoDB" id="10050457at2759"/>
<dbReference type="Proteomes" id="UP000002282">
    <property type="component" value="Mitochondrion"/>
</dbReference>
<dbReference type="GO" id="GO:0005743">
    <property type="term" value="C:mitochondrial inner membrane"/>
    <property type="evidence" value="ECO:0007669"/>
    <property type="project" value="UniProtKB-SubCell"/>
</dbReference>
<dbReference type="GO" id="GO:0045277">
    <property type="term" value="C:respiratory chain complex IV"/>
    <property type="evidence" value="ECO:0007669"/>
    <property type="project" value="EnsemblMetazoa"/>
</dbReference>
<dbReference type="GO" id="GO:0004129">
    <property type="term" value="F:cytochrome-c oxidase activity"/>
    <property type="evidence" value="ECO:0007669"/>
    <property type="project" value="UniProtKB-EC"/>
</dbReference>
<dbReference type="GO" id="GO:0006123">
    <property type="term" value="P:mitochondrial electron transport, cytochrome c to oxygen"/>
    <property type="evidence" value="ECO:0007669"/>
    <property type="project" value="TreeGrafter"/>
</dbReference>
<dbReference type="CDD" id="cd01665">
    <property type="entry name" value="Cyt_c_Oxidase_III"/>
    <property type="match status" value="1"/>
</dbReference>
<dbReference type="FunFam" id="1.10.287.70:FF:000048">
    <property type="entry name" value="Cytochrome c oxidase subunit 3"/>
    <property type="match status" value="1"/>
</dbReference>
<dbReference type="FunFam" id="1.20.120.80:FF:000002">
    <property type="entry name" value="Cytochrome c oxidase subunit 3"/>
    <property type="match status" value="1"/>
</dbReference>
<dbReference type="Gene3D" id="1.10.287.70">
    <property type="match status" value="1"/>
</dbReference>
<dbReference type="Gene3D" id="1.20.120.80">
    <property type="entry name" value="Cytochrome c oxidase, subunit III, four-helix bundle"/>
    <property type="match status" value="1"/>
</dbReference>
<dbReference type="InterPro" id="IPR024791">
    <property type="entry name" value="Cyt_c/ubiquinol_Oxase_su3"/>
</dbReference>
<dbReference type="InterPro" id="IPR033945">
    <property type="entry name" value="Cyt_c_oxase_su3_dom"/>
</dbReference>
<dbReference type="InterPro" id="IPR000298">
    <property type="entry name" value="Cyt_c_oxidase-like_su3"/>
</dbReference>
<dbReference type="InterPro" id="IPR035973">
    <property type="entry name" value="Cyt_c_oxidase_su3-like_sf"/>
</dbReference>
<dbReference type="InterPro" id="IPR013833">
    <property type="entry name" value="Cyt_c_oxidase_su3_a-hlx"/>
</dbReference>
<dbReference type="PANTHER" id="PTHR11403:SF7">
    <property type="entry name" value="CYTOCHROME C OXIDASE SUBUNIT 3"/>
    <property type="match status" value="1"/>
</dbReference>
<dbReference type="PANTHER" id="PTHR11403">
    <property type="entry name" value="CYTOCHROME C OXIDASE SUBUNIT III"/>
    <property type="match status" value="1"/>
</dbReference>
<dbReference type="Pfam" id="PF00510">
    <property type="entry name" value="COX3"/>
    <property type="match status" value="1"/>
</dbReference>
<dbReference type="SUPFAM" id="SSF81452">
    <property type="entry name" value="Cytochrome c oxidase subunit III-like"/>
    <property type="match status" value="1"/>
</dbReference>
<dbReference type="PROSITE" id="PS50253">
    <property type="entry name" value="COX3"/>
    <property type="match status" value="1"/>
</dbReference>
<name>COX3_DROYA</name>
<protein>
    <recommendedName>
        <fullName>Cytochrome c oxidase subunit 3</fullName>
        <ecNumber>7.1.1.9</ecNumber>
    </recommendedName>
    <alternativeName>
        <fullName>Cytochrome c oxidase polypeptide III</fullName>
    </alternativeName>
</protein>
<evidence type="ECO:0000250" key="1">
    <source>
        <dbReference type="UniProtKB" id="P00420"/>
    </source>
</evidence>
<evidence type="ECO:0000255" key="2"/>
<evidence type="ECO:0000305" key="3"/>
<comment type="function">
    <text evidence="1">Component of the cytochrome c oxidase, the last enzyme in the mitochondrial electron transport chain which drives oxidative phosphorylation. The respiratory chain contains 3 multisubunit complexes succinate dehydrogenase (complex II, CII), ubiquinol-cytochrome c oxidoreductase (cytochrome b-c1 complex, complex III, CIII) and cytochrome c oxidase (complex IV, CIV), that cooperate to transfer electrons derived from NADH and succinate to molecular oxygen, creating an electrochemical gradient over the inner membrane that drives transmembrane transport and the ATP synthase. Cytochrome c oxidase is the component of the respiratory chain that catalyzes the reduction of oxygen to water. Electrons originating from reduced cytochrome c in the intermembrane space (IMS) are transferred via the dinuclear copper A center (CU(A)) of subunit 2 and heme A of subunit 1 to the active site in subunit 1, a binuclear center (BNC) formed by heme A3 and copper B (CU(B)). The BNC reduces molecular oxygen to 2 water molecules using 4 electrons from cytochrome c in the IMS and 4 protons from the mitochondrial matrix.</text>
</comment>
<comment type="catalytic activity">
    <reaction evidence="1">
        <text>4 Fe(II)-[cytochrome c] + O2 + 8 H(+)(in) = 4 Fe(III)-[cytochrome c] + 2 H2O + 4 H(+)(out)</text>
        <dbReference type="Rhea" id="RHEA:11436"/>
        <dbReference type="Rhea" id="RHEA-COMP:10350"/>
        <dbReference type="Rhea" id="RHEA-COMP:14399"/>
        <dbReference type="ChEBI" id="CHEBI:15377"/>
        <dbReference type="ChEBI" id="CHEBI:15378"/>
        <dbReference type="ChEBI" id="CHEBI:15379"/>
        <dbReference type="ChEBI" id="CHEBI:29033"/>
        <dbReference type="ChEBI" id="CHEBI:29034"/>
        <dbReference type="EC" id="7.1.1.9"/>
    </reaction>
    <physiologicalReaction direction="left-to-right" evidence="1">
        <dbReference type="Rhea" id="RHEA:11437"/>
    </physiologicalReaction>
</comment>
<comment type="subunit">
    <text evidence="1">Component of the cytochrome c oxidase (complex IV, CIV), a multisubunit enzyme composed of a catalytic core of 3 subunits and several supernumerary subunits. The complex exists as a monomer or a dimer and forms supercomplexes (SCs) in the inner mitochondrial membrane with ubiquinol-cytochrome c oxidoreductase (cytochrome b-c1 complex, complex III, CIII).</text>
</comment>
<comment type="subcellular location">
    <subcellularLocation>
        <location evidence="1">Mitochondrion inner membrane</location>
        <topology evidence="1">Multi-pass membrane protein</topology>
    </subcellularLocation>
</comment>
<comment type="similarity">
    <text evidence="3">Belongs to the cytochrome c oxidase subunit 3 family.</text>
</comment>
<gene>
    <name type="primary">mt:CoIII</name>
    <name type="synonym">CoIII</name>
</gene>
<proteinExistence type="inferred from homology"/>
<feature type="chain" id="PRO_0000183769" description="Cytochrome c oxidase subunit 3">
    <location>
        <begin position="1"/>
        <end position="262"/>
    </location>
</feature>
<feature type="transmembrane region" description="Helical" evidence="2">
    <location>
        <begin position="39"/>
        <end position="59"/>
    </location>
</feature>
<feature type="transmembrane region" description="Helical" evidence="2">
    <location>
        <begin position="83"/>
        <end position="103"/>
    </location>
</feature>
<feature type="transmembrane region" description="Helical" evidence="2">
    <location>
        <begin position="120"/>
        <end position="140"/>
    </location>
</feature>
<feature type="transmembrane region" description="Helical" evidence="2">
    <location>
        <begin position="163"/>
        <end position="183"/>
    </location>
</feature>
<feature type="transmembrane region" description="Helical" evidence="2">
    <location>
        <begin position="201"/>
        <end position="221"/>
    </location>
</feature>
<feature type="transmembrane region" description="Helical" evidence="2">
    <location>
        <begin position="240"/>
        <end position="260"/>
    </location>
</feature>
<keyword id="KW-0472">Membrane</keyword>
<keyword id="KW-0496">Mitochondrion</keyword>
<keyword id="KW-0999">Mitochondrion inner membrane</keyword>
<keyword id="KW-1278">Translocase</keyword>
<keyword id="KW-0812">Transmembrane</keyword>
<keyword id="KW-1133">Transmembrane helix</keyword>